<keyword id="KW-0175">Coiled coil</keyword>
<keyword id="KW-0597">Phosphoprotein</keyword>
<keyword id="KW-1185">Reference proteome</keyword>
<reference key="1">
    <citation type="journal article" date="1996" name="Science">
        <title>Protein kinase N (PKN) and PKN-related protein rhophilin as targets of small GTPase Rho.</title>
        <authorList>
            <person name="Watanabe G."/>
            <person name="Saito Y."/>
            <person name="Madaule P."/>
            <person name="Ishizaki T."/>
            <person name="Fujisawa K."/>
            <person name="Morii N."/>
            <person name="Mukai H."/>
            <person name="Ono Y."/>
            <person name="Kakizuka A."/>
            <person name="Narumiya S."/>
        </authorList>
    </citation>
    <scope>NUCLEOTIDE SEQUENCE [MRNA]</scope>
    <scope>FUNCTION</scope>
    <source>
        <tissue>Brain</tissue>
        <tissue>Embryo</tissue>
    </source>
</reference>
<reference key="2">
    <citation type="journal article" date="2009" name="PLoS Biol.">
        <title>Lineage-specific biology revealed by a finished genome assembly of the mouse.</title>
        <authorList>
            <person name="Church D.M."/>
            <person name="Goodstadt L."/>
            <person name="Hillier L.W."/>
            <person name="Zody M.C."/>
            <person name="Goldstein S."/>
            <person name="She X."/>
            <person name="Bult C.J."/>
            <person name="Agarwala R."/>
            <person name="Cherry J.L."/>
            <person name="DiCuccio M."/>
            <person name="Hlavina W."/>
            <person name="Kapustin Y."/>
            <person name="Meric P."/>
            <person name="Maglott D."/>
            <person name="Birtle Z."/>
            <person name="Marques A.C."/>
            <person name="Graves T."/>
            <person name="Zhou S."/>
            <person name="Teague B."/>
            <person name="Potamousis K."/>
            <person name="Churas C."/>
            <person name="Place M."/>
            <person name="Herschleb J."/>
            <person name="Runnheim R."/>
            <person name="Forrest D."/>
            <person name="Amos-Landgraf J."/>
            <person name="Schwartz D.C."/>
            <person name="Cheng Z."/>
            <person name="Lindblad-Toh K."/>
            <person name="Eichler E.E."/>
            <person name="Ponting C.P."/>
        </authorList>
    </citation>
    <scope>NUCLEOTIDE SEQUENCE [LARGE SCALE GENOMIC DNA]</scope>
    <source>
        <strain>C57BL/6J</strain>
    </source>
</reference>
<reference key="3">
    <citation type="journal article" date="2000" name="J. Cell Sci.">
        <title>Ropporin, a sperm-specific binding protein of rhophilin, that is localized in the fibrous sheath of sperm flagella.</title>
        <authorList>
            <person name="Fujita A."/>
            <person name="Nakamura K."/>
            <person name="Kato T."/>
            <person name="Watanabe N."/>
            <person name="Ishizaki T."/>
            <person name="Kimura K."/>
            <person name="Mizoguchi A."/>
            <person name="Narumiya S."/>
        </authorList>
    </citation>
    <scope>INTERACTION WITH ROPN1</scope>
    <scope>TISSUE SPECIFICITY</scope>
    <scope>DOMAIN</scope>
</reference>
<reference key="4">
    <citation type="journal article" date="2010" name="Cell">
        <title>A tissue-specific atlas of mouse protein phosphorylation and expression.</title>
        <authorList>
            <person name="Huttlin E.L."/>
            <person name="Jedrychowski M.P."/>
            <person name="Elias J.E."/>
            <person name="Goswami T."/>
            <person name="Rad R."/>
            <person name="Beausoleil S.A."/>
            <person name="Villen J."/>
            <person name="Haas W."/>
            <person name="Sowa M.E."/>
            <person name="Gygi S.P."/>
        </authorList>
    </citation>
    <scope>PHOSPHORYLATION [LARGE SCALE ANALYSIS] AT SER-31</scope>
    <scope>IDENTIFICATION BY MASS SPECTROMETRY [LARGE SCALE ANALYSIS]</scope>
    <source>
        <tissue>Kidney</tissue>
    </source>
</reference>
<evidence type="ECO:0000255" key="1">
    <source>
        <dbReference type="PROSITE-ProRule" id="PRU00143"/>
    </source>
</evidence>
<evidence type="ECO:0000255" key="2">
    <source>
        <dbReference type="PROSITE-ProRule" id="PRU00526"/>
    </source>
</evidence>
<evidence type="ECO:0000255" key="3">
    <source>
        <dbReference type="PROSITE-ProRule" id="PRU01207"/>
    </source>
</evidence>
<evidence type="ECO:0000256" key="4">
    <source>
        <dbReference type="SAM" id="MobiDB-lite"/>
    </source>
</evidence>
<evidence type="ECO:0000269" key="5">
    <source>
    </source>
</evidence>
<evidence type="ECO:0000269" key="6">
    <source>
    </source>
</evidence>
<evidence type="ECO:0000305" key="7"/>
<evidence type="ECO:0007744" key="8">
    <source>
    </source>
</evidence>
<protein>
    <recommendedName>
        <fullName>Rhophilin-1</fullName>
    </recommendedName>
    <alternativeName>
        <fullName>GTP-Rho-binding protein 1</fullName>
    </alternativeName>
</protein>
<dbReference type="EMBL" id="U43194">
    <property type="protein sequence ID" value="AAC52388.1"/>
    <property type="molecule type" value="mRNA"/>
</dbReference>
<dbReference type="EMBL" id="AC116393">
    <property type="status" value="NOT_ANNOTATED_CDS"/>
    <property type="molecule type" value="Genomic_DNA"/>
</dbReference>
<dbReference type="CCDS" id="CCDS27548.1"/>
<dbReference type="RefSeq" id="NP_032190.2">
    <property type="nucleotide sequence ID" value="NM_008164.3"/>
</dbReference>
<dbReference type="SMR" id="Q61085"/>
<dbReference type="BioGRID" id="200048">
    <property type="interactions" value="3"/>
</dbReference>
<dbReference type="CORUM" id="Q61085"/>
<dbReference type="FunCoup" id="Q61085">
    <property type="interactions" value="237"/>
</dbReference>
<dbReference type="IntAct" id="Q61085">
    <property type="interactions" value="1"/>
</dbReference>
<dbReference type="MINT" id="Q61085"/>
<dbReference type="STRING" id="10090.ENSMUSP00000113042"/>
<dbReference type="GlyGen" id="Q61085">
    <property type="glycosylation" value="1 site"/>
</dbReference>
<dbReference type="iPTMnet" id="Q61085"/>
<dbReference type="PaxDb" id="10090-ENSMUSP00000113042"/>
<dbReference type="ProteomicsDB" id="255215"/>
<dbReference type="Antibodypedia" id="7394">
    <property type="antibodies" value="169 antibodies from 25 providers"/>
</dbReference>
<dbReference type="DNASU" id="14787"/>
<dbReference type="Ensembl" id="ENSMUST00000023244.6">
    <property type="protein sequence ID" value="ENSMUSP00000023244.6"/>
    <property type="gene ID" value="ENSMUSG00000022580.14"/>
</dbReference>
<dbReference type="GeneID" id="14787"/>
<dbReference type="KEGG" id="mmu:14787"/>
<dbReference type="UCSC" id="uc007whc.2">
    <property type="organism name" value="mouse"/>
</dbReference>
<dbReference type="AGR" id="MGI:1098783"/>
<dbReference type="CTD" id="114822"/>
<dbReference type="MGI" id="MGI:1098783">
    <property type="gene designation" value="Rhpn1"/>
</dbReference>
<dbReference type="VEuPathDB" id="HostDB:ENSMUSG00000022580"/>
<dbReference type="eggNOG" id="KOG2220">
    <property type="taxonomic scope" value="Eukaryota"/>
</dbReference>
<dbReference type="GeneTree" id="ENSGT00940000153837"/>
<dbReference type="HOGENOM" id="CLU_006514_3_0_1"/>
<dbReference type="InParanoid" id="Q61085"/>
<dbReference type="OrthoDB" id="64867at2759"/>
<dbReference type="Reactome" id="R-MMU-5666185">
    <property type="pathway name" value="RHO GTPases Activate Rhotekin and Rhophilins"/>
</dbReference>
<dbReference type="Reactome" id="R-MMU-8980692">
    <property type="pathway name" value="RHOA GTPase cycle"/>
</dbReference>
<dbReference type="BioGRID-ORCS" id="14787">
    <property type="hits" value="4 hits in 79 CRISPR screens"/>
</dbReference>
<dbReference type="PRO" id="PR:Q61085"/>
<dbReference type="Proteomes" id="UP000000589">
    <property type="component" value="Chromosome 15"/>
</dbReference>
<dbReference type="RNAct" id="Q61085">
    <property type="molecule type" value="protein"/>
</dbReference>
<dbReference type="Bgee" id="ENSMUSG00000022580">
    <property type="expression patterns" value="Expressed in saccule of membranous labyrinth and 84 other cell types or tissues"/>
</dbReference>
<dbReference type="ExpressionAtlas" id="Q61085">
    <property type="expression patterns" value="baseline and differential"/>
</dbReference>
<dbReference type="GO" id="GO:0071944">
    <property type="term" value="C:cell periphery"/>
    <property type="evidence" value="ECO:0000314"/>
    <property type="project" value="MGI"/>
</dbReference>
<dbReference type="GO" id="GO:0005829">
    <property type="term" value="C:cytosol"/>
    <property type="evidence" value="ECO:0000304"/>
    <property type="project" value="Reactome"/>
</dbReference>
<dbReference type="GO" id="GO:0005886">
    <property type="term" value="C:plasma membrane"/>
    <property type="evidence" value="ECO:0000314"/>
    <property type="project" value="MGI"/>
</dbReference>
<dbReference type="GO" id="GO:0048041">
    <property type="term" value="P:focal adhesion assembly"/>
    <property type="evidence" value="ECO:0000315"/>
    <property type="project" value="MGI"/>
</dbReference>
<dbReference type="GO" id="GO:0003094">
    <property type="term" value="P:glomerular filtration"/>
    <property type="evidence" value="ECO:0000315"/>
    <property type="project" value="MGI"/>
</dbReference>
<dbReference type="GO" id="GO:0001822">
    <property type="term" value="P:kidney development"/>
    <property type="evidence" value="ECO:0000315"/>
    <property type="project" value="MGI"/>
</dbReference>
<dbReference type="GO" id="GO:0051497">
    <property type="term" value="P:negative regulation of stress fiber assembly"/>
    <property type="evidence" value="ECO:0000314"/>
    <property type="project" value="MGI"/>
</dbReference>
<dbReference type="GO" id="GO:0120039">
    <property type="term" value="P:plasma membrane bounded cell projection morphogenesis"/>
    <property type="evidence" value="ECO:0000315"/>
    <property type="project" value="MGI"/>
</dbReference>
<dbReference type="GO" id="GO:0097018">
    <property type="term" value="P:renal albumin absorption"/>
    <property type="evidence" value="ECO:0000315"/>
    <property type="project" value="MGI"/>
</dbReference>
<dbReference type="GO" id="GO:0007165">
    <property type="term" value="P:signal transduction"/>
    <property type="evidence" value="ECO:0007669"/>
    <property type="project" value="InterPro"/>
</dbReference>
<dbReference type="CDD" id="cd09248">
    <property type="entry name" value="BRO1_Rhophilin_1"/>
    <property type="match status" value="1"/>
</dbReference>
<dbReference type="CDD" id="cd11633">
    <property type="entry name" value="HR1_Rhophilin-1"/>
    <property type="match status" value="1"/>
</dbReference>
<dbReference type="CDD" id="cd06712">
    <property type="entry name" value="PDZ_rhophilin-like"/>
    <property type="match status" value="1"/>
</dbReference>
<dbReference type="FunFam" id="1.25.40.280:FF:000003">
    <property type="entry name" value="RHPN1 isoform 1"/>
    <property type="match status" value="1"/>
</dbReference>
<dbReference type="FunFam" id="2.30.42.10:FF:000160">
    <property type="entry name" value="RHPN1 isoform 1"/>
    <property type="match status" value="1"/>
</dbReference>
<dbReference type="Gene3D" id="2.30.42.10">
    <property type="match status" value="1"/>
</dbReference>
<dbReference type="Gene3D" id="1.25.40.280">
    <property type="entry name" value="alix/aip1 like domains"/>
    <property type="match status" value="1"/>
</dbReference>
<dbReference type="Gene3D" id="1.10.287.160">
    <property type="entry name" value="HR1 repeat"/>
    <property type="match status" value="1"/>
</dbReference>
<dbReference type="InterPro" id="IPR004328">
    <property type="entry name" value="BRO1_dom"/>
</dbReference>
<dbReference type="InterPro" id="IPR038499">
    <property type="entry name" value="BRO1_sf"/>
</dbReference>
<dbReference type="InterPro" id="IPR011072">
    <property type="entry name" value="HR1_rho-bd"/>
</dbReference>
<dbReference type="InterPro" id="IPR036274">
    <property type="entry name" value="HR1_rpt_sf"/>
</dbReference>
<dbReference type="InterPro" id="IPR001478">
    <property type="entry name" value="PDZ"/>
</dbReference>
<dbReference type="InterPro" id="IPR036034">
    <property type="entry name" value="PDZ_sf"/>
</dbReference>
<dbReference type="InterPro" id="IPR042715">
    <property type="entry name" value="Rhophilin-1_BRO1"/>
</dbReference>
<dbReference type="InterPro" id="IPR047138">
    <property type="entry name" value="RHPN1_2"/>
</dbReference>
<dbReference type="PANTHER" id="PTHR23031">
    <property type="entry name" value="RHOPHILIN"/>
    <property type="match status" value="1"/>
</dbReference>
<dbReference type="PANTHER" id="PTHR23031:SF6">
    <property type="entry name" value="RHOPHILIN-1"/>
    <property type="match status" value="1"/>
</dbReference>
<dbReference type="Pfam" id="PF03097">
    <property type="entry name" value="BRO1"/>
    <property type="match status" value="1"/>
</dbReference>
<dbReference type="Pfam" id="PF02185">
    <property type="entry name" value="HR1"/>
    <property type="match status" value="1"/>
</dbReference>
<dbReference type="Pfam" id="PF00595">
    <property type="entry name" value="PDZ"/>
    <property type="match status" value="1"/>
</dbReference>
<dbReference type="SMART" id="SM01041">
    <property type="entry name" value="BRO1"/>
    <property type="match status" value="1"/>
</dbReference>
<dbReference type="SMART" id="SM00742">
    <property type="entry name" value="Hr1"/>
    <property type="match status" value="1"/>
</dbReference>
<dbReference type="SMART" id="SM00228">
    <property type="entry name" value="PDZ"/>
    <property type="match status" value="1"/>
</dbReference>
<dbReference type="SUPFAM" id="SSF46585">
    <property type="entry name" value="HR1 repeat"/>
    <property type="match status" value="1"/>
</dbReference>
<dbReference type="SUPFAM" id="SSF50156">
    <property type="entry name" value="PDZ domain-like"/>
    <property type="match status" value="1"/>
</dbReference>
<dbReference type="PROSITE" id="PS51180">
    <property type="entry name" value="BRO1"/>
    <property type="match status" value="1"/>
</dbReference>
<dbReference type="PROSITE" id="PS50106">
    <property type="entry name" value="PDZ"/>
    <property type="match status" value="1"/>
</dbReference>
<dbReference type="PROSITE" id="PS51860">
    <property type="entry name" value="REM_1"/>
    <property type="match status" value="1"/>
</dbReference>
<gene>
    <name type="primary">Rhpn1</name>
    <name type="synonym">Grbp</name>
</gene>
<comment type="function">
    <text evidence="6">Has no enzymatic activity. May serve as a target for Rho, and interact with some cytoskeletal component upon Rho binding or relay a Rho signal to other molecules.</text>
</comment>
<comment type="subunit">
    <text evidence="5">Binds specifically to GTP-Rho. Interacts with ROPN1.</text>
</comment>
<comment type="tissue specificity">
    <text evidence="5">Highly expressed in testis.</text>
</comment>
<comment type="domain">
    <text evidence="5">The PDZ domain mediates interaction with ROPN1.</text>
</comment>
<comment type="similarity">
    <text evidence="7">Belongs to the RHPN family.</text>
</comment>
<sequence>MILEERPDGQGTGEESSRPQDDGSIRKGYGSFVQNQPGQLQSHRARLHQQISKELRMRTGAENLYRATSNTWVRETVALELSYVNSNLQLLKEELAELSTSVDVDQPEGEGITIPMIPLGLKETKELDWATPLKELISEHFGEDGTSFETEIQELEDLRQATRTPSRDEAGLDLLAAYYSQLCFLDARFFSPSRSPGLLFHWYDSLTGVPAQQRALAFEKGSVLFNIGALHTQIGARQDCSCTEGTNHAAEAFQRAAGAFRLLRENFSHAPSPDMSAASLSMLEQLMIAQAQECIFKGLLLPASATPDICPDQLQLAQEAAQVATEYGLVHRAMAQPPVRDYLPASWTNLAHVKAEHFCALAHYHAAMALCESHPAKGELARQEHVFQPSTPHEPLGPTLPQHPEDRRKLAKAHLKRAILGQEEALRLHTLCRVLRKVDLLQVVVTQALRRSLAKYSQLEREDDFFEATEAPDIQPKTHQTPEGPLSVFSTKNRWQLVGPVHMTRGEGSFGFTLRGDSPVLIAAVVPGGQAESAGLKEGDYIVSVNGQPCKWWKHLEVVTQLRSMGEEGVSLQVVSLLPSPEPRGTGPRRAALLWNQRECGFETPMPTRTRPWPILGWSRKNKQGKTGSHPDPCTNRNCVTCP</sequence>
<organism>
    <name type="scientific">Mus musculus</name>
    <name type="common">Mouse</name>
    <dbReference type="NCBI Taxonomy" id="10090"/>
    <lineage>
        <taxon>Eukaryota</taxon>
        <taxon>Metazoa</taxon>
        <taxon>Chordata</taxon>
        <taxon>Craniata</taxon>
        <taxon>Vertebrata</taxon>
        <taxon>Euteleostomi</taxon>
        <taxon>Mammalia</taxon>
        <taxon>Eutheria</taxon>
        <taxon>Euarchontoglires</taxon>
        <taxon>Glires</taxon>
        <taxon>Rodentia</taxon>
        <taxon>Myomorpha</taxon>
        <taxon>Muroidea</taxon>
        <taxon>Muridae</taxon>
        <taxon>Murinae</taxon>
        <taxon>Mus</taxon>
        <taxon>Mus</taxon>
    </lineage>
</organism>
<accession>Q61085</accession>
<accession>E9QMX9</accession>
<name>RHPN1_MOUSE</name>
<feature type="chain" id="PRO_0000218896" description="Rhophilin-1">
    <location>
        <begin position="1"/>
        <end position="643"/>
    </location>
</feature>
<feature type="domain" description="REM-1" evidence="3">
    <location>
        <begin position="30"/>
        <end position="104"/>
    </location>
</feature>
<feature type="domain" description="BRO1" evidence="2">
    <location>
        <begin position="115"/>
        <end position="462"/>
    </location>
</feature>
<feature type="domain" description="PDZ" evidence="1">
    <location>
        <begin position="500"/>
        <end position="577"/>
    </location>
</feature>
<feature type="region of interest" description="Disordered" evidence="4">
    <location>
        <begin position="1"/>
        <end position="43"/>
    </location>
</feature>
<feature type="compositionally biased region" description="Basic and acidic residues" evidence="4">
    <location>
        <begin position="15"/>
        <end position="25"/>
    </location>
</feature>
<feature type="compositionally biased region" description="Polar residues" evidence="4">
    <location>
        <begin position="32"/>
        <end position="42"/>
    </location>
</feature>
<feature type="modified residue" description="Phosphoserine" evidence="8">
    <location>
        <position position="31"/>
    </location>
</feature>
<feature type="sequence conflict" description="In Ref. 1; AAC52388." evidence="7" ref="1">
    <original>S</original>
    <variation>G</variation>
    <location>
        <position position="509"/>
    </location>
</feature>
<proteinExistence type="evidence at protein level"/>